<gene>
    <name type="primary">MLP1</name>
    <name type="ORF">CTHT_0041070</name>
</gene>
<proteinExistence type="inferred from homology"/>
<comment type="function">
    <text evidence="2">Involved in the structural and functional organization of perinuclear chromatin. Associates with the nuclear pore complex and form filamentous structures along the nuclear periphery.</text>
</comment>
<comment type="subunit">
    <text evidence="1 7">The nuclear pore complex (NPC) constitutes the exclusive means of nucleocytoplasmic transport. NPCs allow the passive diffusion of ions and small molecules and the active, nuclear transport receptor-mediated bidirectional transport of macromolecules such as proteins, RNAs, ribonucleoparticles (RNPs), and ribosomal subunits across the nuclear envelope. The 55-60 MDa NPC is composed of at least 28 different subunits: AMO1, ELYS, GLE1, GLE2, MLP1, NDC1, NIC96, NSP1, NUP133, NUP145, NUP152, NUP159, NUP170, NUP188, NUP192, NUP37, NUP49, NUP53, NUP56, NUP57, NUP82, NUP84, NUP85, POM152, POM33, POM34, SEC13 and SEH1. Due to its 8-fold rotational symmetry, all subunits are present with 8 copies or multiples thereof.</text>
</comment>
<comment type="subcellular location">
    <subcellularLocation>
        <location evidence="2">Nucleus</location>
    </subcellularLocation>
</comment>
<feature type="chain" id="PRO_0000433195" description="Protein MLP1 homolog">
    <location>
        <begin position="1"/>
        <end position="2085"/>
    </location>
</feature>
<feature type="region of interest" description="Disordered" evidence="5">
    <location>
        <begin position="365"/>
        <end position="398"/>
    </location>
</feature>
<feature type="region of interest" description="Disordered" evidence="5">
    <location>
        <begin position="934"/>
        <end position="953"/>
    </location>
</feature>
<feature type="region of interest" description="Disordered" evidence="5">
    <location>
        <begin position="1482"/>
        <end position="1514"/>
    </location>
</feature>
<feature type="region of interest" description="Disordered" evidence="5">
    <location>
        <begin position="1567"/>
        <end position="1591"/>
    </location>
</feature>
<feature type="region of interest" description="Disordered" evidence="5">
    <location>
        <begin position="1816"/>
        <end position="2085"/>
    </location>
</feature>
<feature type="coiled-coil region" evidence="3">
    <location>
        <begin position="44"/>
        <end position="367"/>
    </location>
</feature>
<feature type="coiled-coil region" evidence="3">
    <location>
        <begin position="399"/>
        <end position="513"/>
    </location>
</feature>
<feature type="coiled-coil region" evidence="3">
    <location>
        <begin position="568"/>
        <end position="630"/>
    </location>
</feature>
<feature type="coiled-coil region" evidence="3">
    <location>
        <begin position="675"/>
        <end position="1205"/>
    </location>
</feature>
<feature type="coiled-coil region" evidence="3">
    <location>
        <begin position="1232"/>
        <end position="1667"/>
    </location>
</feature>
<feature type="coiled-coil region" evidence="3">
    <location>
        <begin position="1744"/>
        <end position="1799"/>
    </location>
</feature>
<feature type="short sequence motif" description="Nuclear localization signal" evidence="4">
    <location>
        <begin position="1159"/>
        <end position="1166"/>
    </location>
</feature>
<feature type="compositionally biased region" description="Polar residues" evidence="5">
    <location>
        <begin position="1482"/>
        <end position="1503"/>
    </location>
</feature>
<feature type="compositionally biased region" description="Low complexity" evidence="5">
    <location>
        <begin position="1504"/>
        <end position="1514"/>
    </location>
</feature>
<feature type="compositionally biased region" description="Polar residues" evidence="5">
    <location>
        <begin position="1574"/>
        <end position="1584"/>
    </location>
</feature>
<feature type="compositionally biased region" description="Pro residues" evidence="5">
    <location>
        <begin position="1817"/>
        <end position="1827"/>
    </location>
</feature>
<feature type="compositionally biased region" description="Low complexity" evidence="5">
    <location>
        <begin position="1843"/>
        <end position="1858"/>
    </location>
</feature>
<feature type="compositionally biased region" description="Low complexity" evidence="5">
    <location>
        <begin position="1910"/>
        <end position="1974"/>
    </location>
</feature>
<feature type="compositionally biased region" description="Low complexity" evidence="5">
    <location>
        <begin position="1982"/>
        <end position="1994"/>
    </location>
</feature>
<feature type="compositionally biased region" description="Gly residues" evidence="5">
    <location>
        <begin position="1995"/>
        <end position="2016"/>
    </location>
</feature>
<feature type="compositionally biased region" description="Low complexity" evidence="5">
    <location>
        <begin position="2028"/>
        <end position="2040"/>
    </location>
</feature>
<feature type="compositionally biased region" description="Gly residues" evidence="5">
    <location>
        <begin position="2041"/>
        <end position="2051"/>
    </location>
</feature>
<feature type="compositionally biased region" description="Gly residues" evidence="5">
    <location>
        <begin position="2076"/>
        <end position="2085"/>
    </location>
</feature>
<dbReference type="EMBL" id="GL988043">
    <property type="protein sequence ID" value="EGS19628.1"/>
    <property type="molecule type" value="Genomic_DNA"/>
</dbReference>
<dbReference type="EMBL" id="JF276299">
    <property type="protein sequence ID" value="AEL00692.1"/>
    <property type="molecule type" value="Genomic_DNA"/>
</dbReference>
<dbReference type="RefSeq" id="XP_006694513.1">
    <property type="nucleotide sequence ID" value="XM_006694450.1"/>
</dbReference>
<dbReference type="SMR" id="G0SA56"/>
<dbReference type="DIP" id="DIP-61564N"/>
<dbReference type="IntAct" id="G0SA56">
    <property type="interactions" value="2"/>
</dbReference>
<dbReference type="STRING" id="759272.G0SA56"/>
<dbReference type="TCDB" id="1.I.1.1.2">
    <property type="family name" value="the nuclear pore complex (npc) family"/>
</dbReference>
<dbReference type="GeneID" id="18258145"/>
<dbReference type="KEGG" id="cthr:CTHT_0041070"/>
<dbReference type="eggNOG" id="KOG4674">
    <property type="taxonomic scope" value="Eukaryota"/>
</dbReference>
<dbReference type="HOGENOM" id="CLU_001250_0_0_1"/>
<dbReference type="OMA" id="HAQQNYE"/>
<dbReference type="OrthoDB" id="343070at2759"/>
<dbReference type="Proteomes" id="UP000008066">
    <property type="component" value="Unassembled WGS sequence"/>
</dbReference>
<dbReference type="GO" id="GO:0005643">
    <property type="term" value="C:nuclear pore"/>
    <property type="evidence" value="ECO:0007669"/>
    <property type="project" value="TreeGrafter"/>
</dbReference>
<dbReference type="GO" id="GO:0017056">
    <property type="term" value="F:structural constituent of nuclear pore"/>
    <property type="evidence" value="ECO:0007669"/>
    <property type="project" value="TreeGrafter"/>
</dbReference>
<dbReference type="GO" id="GO:0006406">
    <property type="term" value="P:mRNA export from nucleus"/>
    <property type="evidence" value="ECO:0007669"/>
    <property type="project" value="TreeGrafter"/>
</dbReference>
<dbReference type="GO" id="GO:0006606">
    <property type="term" value="P:protein import into nucleus"/>
    <property type="evidence" value="ECO:0007669"/>
    <property type="project" value="InterPro"/>
</dbReference>
<dbReference type="InterPro" id="IPR012929">
    <property type="entry name" value="TPR/MLP1"/>
</dbReference>
<dbReference type="PANTHER" id="PTHR18898:SF2">
    <property type="entry name" value="NUCLEOPROTEIN TPR"/>
    <property type="match status" value="1"/>
</dbReference>
<dbReference type="PANTHER" id="PTHR18898">
    <property type="entry name" value="NUCLEOPROTEIN TPR-RELATED"/>
    <property type="match status" value="1"/>
</dbReference>
<dbReference type="Pfam" id="PF25481">
    <property type="entry name" value="Nucleoprot-TPR"/>
    <property type="match status" value="1"/>
</dbReference>
<dbReference type="Pfam" id="PF07926">
    <property type="entry name" value="TPR_MLP1_2"/>
    <property type="match status" value="1"/>
</dbReference>
<name>MLP1_CHATD</name>
<reference key="1">
    <citation type="journal article" date="2011" name="Cell">
        <title>Insight into structure and assembly of the nuclear pore complex by utilizing the genome of a eukaryotic thermophile.</title>
        <authorList>
            <person name="Amlacher S."/>
            <person name="Sarges P."/>
            <person name="Flemming D."/>
            <person name="van Noort V."/>
            <person name="Kunze R."/>
            <person name="Devos D.P."/>
            <person name="Arumugam M."/>
            <person name="Bork P."/>
            <person name="Hurt E."/>
        </authorList>
    </citation>
    <scope>NUCLEOTIDE SEQUENCE [LARGE SCALE GENOMIC DNA]</scope>
    <source>
        <strain>DSM 1495 / CBS 144.50 / IMI 039719</strain>
    </source>
</reference>
<protein>
    <recommendedName>
        <fullName evidence="6">Protein MLP1 homolog</fullName>
    </recommendedName>
</protein>
<keyword id="KW-0175">Coiled coil</keyword>
<keyword id="KW-0539">Nucleus</keyword>
<keyword id="KW-1185">Reference proteome</keyword>
<accession>G0SA56</accession>
<accession>G0ZGV4</accession>
<organism>
    <name type="scientific">Chaetomium thermophilum (strain DSM 1495 / CBS 144.50 / IMI 039719)</name>
    <name type="common">Thermochaetoides thermophila</name>
    <dbReference type="NCBI Taxonomy" id="759272"/>
    <lineage>
        <taxon>Eukaryota</taxon>
        <taxon>Fungi</taxon>
        <taxon>Dikarya</taxon>
        <taxon>Ascomycota</taxon>
        <taxon>Pezizomycotina</taxon>
        <taxon>Sordariomycetes</taxon>
        <taxon>Sordariomycetidae</taxon>
        <taxon>Sordariales</taxon>
        <taxon>Chaetomiaceae</taxon>
        <taxon>Thermochaetoides</taxon>
    </lineage>
</organism>
<evidence type="ECO:0000250" key="1">
    <source>
        <dbReference type="UniProtKB" id="O74424"/>
    </source>
</evidence>
<evidence type="ECO:0000250" key="2">
    <source>
        <dbReference type="UniProtKB" id="Q02455"/>
    </source>
</evidence>
<evidence type="ECO:0000255" key="3"/>
<evidence type="ECO:0000255" key="4">
    <source>
        <dbReference type="PROSITE-ProRule" id="PRU00768"/>
    </source>
</evidence>
<evidence type="ECO:0000256" key="5">
    <source>
        <dbReference type="SAM" id="MobiDB-lite"/>
    </source>
</evidence>
<evidence type="ECO:0000303" key="6">
    <source>
    </source>
</evidence>
<evidence type="ECO:0000305" key="7">
    <source>
    </source>
</evidence>
<sequence>MAAAEVDLGYLSAQANISQVDLETVVSAPTADLVKSVLAAVLSKIRELEQDKFHLNVELEGAIRGAESRCEQFKATSDKALKEVEELRQKLQSEESARRTLENELQTLKSSGSASLSEIETLRARIASLETSNRETLAIVDSKASANAALSEELQKQHQKILKLNQEINNLNQAVQTAQTAANSAKYREESLKQELELAKKNNDWYDNELKTKAAENLKIRKEKGAQIAQLQREKEDALSTIQSLQKTEQQLRKRLQEAQSKAEEALTKVQQLQESAARAEESFRQELESSKRLVELKDQQAQTHRNRLKEVELRLEKVKDDSAEEIRRVRRELEQAKEDLSQSEQQVQDLQSEVDRLRTLVESHDGVPGSVPQTPRANGSLLARPSSPFGTPASLRGKATQRATETLEELLKVKAQLASEQRRSQKLQEDLDDAVSMLEAKLPEIDELNAESERLRNEVIQMSEIMQQSYEERDAAVKAARKAEAAASQAQAEVKILRAQLRDLSTQIHVLIFNAHAKEKGMDQLTEEEIAQFERLQRGEISEGALEDLSDTHRFITERFTVFKDIYELQQKNEELLKLTRELATKMENEEALAAQRQAAQEHEEVQQLRATVAALQDEVRSITIRMKSHMTERDMFRRMLQQRATPAEIQKVLGTQADGEQREVLPSVEQPHANEAQLAAALRELQAQFDAYRNDQVTDRNAMREQIDKLSGEKGSLQSEVTKLSSQLTLATERYNMLESNFKALQSENQELQKRNQSLSEAAAKQDIRTQQVAEDLVEARGLVESLRSENANLKAEKALWRTIQERLTQDNESLAQEKTRLNGLLASQQSLLNERELSEAETKRRLQAQIDSLEAELSTTKRKLSEEIEESKKVQLRKEFDAQQFQKRIDELTSMISQVKEENIQVKTTRDHLQARVSELEIEVRNAQERAERLRPLPTPRAPAAAEQPSEEAQARIEELEGEVQELKNNLDLLTVQLEHAKQQAEQFKQLSKDMEEELSSLNESHEQYRQEMDAALASKANTINELQQRVEALTAELSNTNNELNMLRDSQSDVARKFEEKERMLNAEIARLKDEEERYKEAARFHQQDLRAQAEIATKAQQDYEQELVKHAEAAKLLQQLRAEHNELKTQAAAWRAEADSAKISLAQSEQSWEERRQRLEQEIAEIKARRDDMAAQNKLLHQQLDAVTAQITALQQKRTQGDVSGEAAAPAIADMATEGLRELNSYLRREKEILEVQYDIKVQEAKRLQQQLEYTQSQLDETRLKLEQERASQADSTRTSLTHKELMEKLNELNLIRESNVTLRNENQRAQALLEQKAARITELEAKIQPLEARIAELELDKGFKEEEIRQLQEARDGLQKRIETILSKYGQADPQEVEQLKAMIAALEGERDVLKQSEQALQQKVKEAENALETKTNEWKATREKLAEDFKARFRNMKTQRDEATNEKNTLQATLDGVKEQLAALEKELETTKQQLATATEKNTSLQQQLAASSTEQPAAAPVSAAPSDQINELTQQLQAVKQQLESVSAQKAAAEAQVEQLKQELAAAIAERDRALAATSGGDVATAETSVSAQPSAGLSDEERKALEEKIAAAEAKAAEFEKRAKELEEQADNIVKQRSDKMKTALNKKLQESKEAMEKQIQEEKAKLQAEFDLKLQQELAIIKAEQQTAGPQNGVPATPVKTEANAAPGTPVPDITNMTDAQIREAVAKNPTISAIVKSNVKRMVAAETKKIKEEIEAALKAEYEQKITNAKEQATALTEKKSALRINMLDRQHKTAQAKLAIVETAAKETPQKPVVEVWNIAKDAKPPAPAQAPAPAPASAAPSPAPTPAQPVAPATAAPAAPAQAPSAAPPKEETKQEAKTTTAAPPSAIPKPAVNPFTAPLNPFGAPAPTSNIPAPPQAGQQPQQTQPQQPQQPQQQQQQQKGQQQQQQQQQQQQGQQQQQQGQQQAGGQNQPQRMGIPVPAGRGGPGGARTARGLYQAGPRGARGGRGGGFVGAGRGAGGAAGGLNPNAGEFTPGGATATAAAAAAAGGAGGSAGAGNAGNKRQRDGEGGQPQGERGGKRARGGGGGGGGNQ</sequence>